<evidence type="ECO:0000255" key="1">
    <source>
        <dbReference type="HAMAP-Rule" id="MF_00248"/>
    </source>
</evidence>
<dbReference type="EC" id="3.4.25.2" evidence="1"/>
<dbReference type="EMBL" id="BX640437">
    <property type="protein sequence ID" value="CAE30679.1"/>
    <property type="molecule type" value="Genomic_DNA"/>
</dbReference>
<dbReference type="RefSeq" id="WP_003807163.1">
    <property type="nucleotide sequence ID" value="NC_002927.3"/>
</dbReference>
<dbReference type="SMR" id="Q7WQZ3"/>
<dbReference type="MEROPS" id="T01.006"/>
<dbReference type="GeneID" id="93206407"/>
<dbReference type="KEGG" id="bbr:BB0179"/>
<dbReference type="eggNOG" id="COG5405">
    <property type="taxonomic scope" value="Bacteria"/>
</dbReference>
<dbReference type="HOGENOM" id="CLU_093872_1_0_4"/>
<dbReference type="Proteomes" id="UP000001027">
    <property type="component" value="Chromosome"/>
</dbReference>
<dbReference type="GO" id="GO:0009376">
    <property type="term" value="C:HslUV protease complex"/>
    <property type="evidence" value="ECO:0007669"/>
    <property type="project" value="UniProtKB-UniRule"/>
</dbReference>
<dbReference type="GO" id="GO:0005839">
    <property type="term" value="C:proteasome core complex"/>
    <property type="evidence" value="ECO:0007669"/>
    <property type="project" value="InterPro"/>
</dbReference>
<dbReference type="GO" id="GO:0046872">
    <property type="term" value="F:metal ion binding"/>
    <property type="evidence" value="ECO:0007669"/>
    <property type="project" value="UniProtKB-KW"/>
</dbReference>
<dbReference type="GO" id="GO:0004298">
    <property type="term" value="F:threonine-type endopeptidase activity"/>
    <property type="evidence" value="ECO:0007669"/>
    <property type="project" value="UniProtKB-KW"/>
</dbReference>
<dbReference type="GO" id="GO:0051603">
    <property type="term" value="P:proteolysis involved in protein catabolic process"/>
    <property type="evidence" value="ECO:0007669"/>
    <property type="project" value="InterPro"/>
</dbReference>
<dbReference type="CDD" id="cd01913">
    <property type="entry name" value="protease_HslV"/>
    <property type="match status" value="1"/>
</dbReference>
<dbReference type="FunFam" id="3.60.20.10:FF:000002">
    <property type="entry name" value="ATP-dependent protease subunit HslV"/>
    <property type="match status" value="1"/>
</dbReference>
<dbReference type="Gene3D" id="3.60.20.10">
    <property type="entry name" value="Glutamine Phosphoribosylpyrophosphate, subunit 1, domain 1"/>
    <property type="match status" value="1"/>
</dbReference>
<dbReference type="HAMAP" id="MF_00248">
    <property type="entry name" value="HslV"/>
    <property type="match status" value="1"/>
</dbReference>
<dbReference type="InterPro" id="IPR022281">
    <property type="entry name" value="ATP-dep_Prtase_HsIV_su"/>
</dbReference>
<dbReference type="InterPro" id="IPR029055">
    <property type="entry name" value="Ntn_hydrolases_N"/>
</dbReference>
<dbReference type="InterPro" id="IPR001353">
    <property type="entry name" value="Proteasome_sua/b"/>
</dbReference>
<dbReference type="InterPro" id="IPR023333">
    <property type="entry name" value="Proteasome_suB-type"/>
</dbReference>
<dbReference type="NCBIfam" id="TIGR03692">
    <property type="entry name" value="ATP_dep_HslV"/>
    <property type="match status" value="1"/>
</dbReference>
<dbReference type="NCBIfam" id="NF003964">
    <property type="entry name" value="PRK05456.1"/>
    <property type="match status" value="1"/>
</dbReference>
<dbReference type="PANTHER" id="PTHR32194:SF0">
    <property type="entry name" value="ATP-DEPENDENT PROTEASE SUBUNIT HSLV"/>
    <property type="match status" value="1"/>
</dbReference>
<dbReference type="PANTHER" id="PTHR32194">
    <property type="entry name" value="METALLOPROTEASE TLDD"/>
    <property type="match status" value="1"/>
</dbReference>
<dbReference type="Pfam" id="PF00227">
    <property type="entry name" value="Proteasome"/>
    <property type="match status" value="1"/>
</dbReference>
<dbReference type="PIRSF" id="PIRSF039093">
    <property type="entry name" value="HslV"/>
    <property type="match status" value="1"/>
</dbReference>
<dbReference type="SUPFAM" id="SSF56235">
    <property type="entry name" value="N-terminal nucleophile aminohydrolases (Ntn hydrolases)"/>
    <property type="match status" value="1"/>
</dbReference>
<dbReference type="PROSITE" id="PS51476">
    <property type="entry name" value="PROTEASOME_BETA_2"/>
    <property type="match status" value="1"/>
</dbReference>
<accession>Q7WQZ3</accession>
<name>HSLV_BORBR</name>
<protein>
    <recommendedName>
        <fullName evidence="1">ATP-dependent protease subunit HslV</fullName>
        <ecNumber evidence="1">3.4.25.2</ecNumber>
    </recommendedName>
</protein>
<reference key="1">
    <citation type="journal article" date="2003" name="Nat. Genet.">
        <title>Comparative analysis of the genome sequences of Bordetella pertussis, Bordetella parapertussis and Bordetella bronchiseptica.</title>
        <authorList>
            <person name="Parkhill J."/>
            <person name="Sebaihia M."/>
            <person name="Preston A."/>
            <person name="Murphy L.D."/>
            <person name="Thomson N.R."/>
            <person name="Harris D.E."/>
            <person name="Holden M.T.G."/>
            <person name="Churcher C.M."/>
            <person name="Bentley S.D."/>
            <person name="Mungall K.L."/>
            <person name="Cerdeno-Tarraga A.-M."/>
            <person name="Temple L."/>
            <person name="James K.D."/>
            <person name="Harris B."/>
            <person name="Quail M.A."/>
            <person name="Achtman M."/>
            <person name="Atkin R."/>
            <person name="Baker S."/>
            <person name="Basham D."/>
            <person name="Bason N."/>
            <person name="Cherevach I."/>
            <person name="Chillingworth T."/>
            <person name="Collins M."/>
            <person name="Cronin A."/>
            <person name="Davis P."/>
            <person name="Doggett J."/>
            <person name="Feltwell T."/>
            <person name="Goble A."/>
            <person name="Hamlin N."/>
            <person name="Hauser H."/>
            <person name="Holroyd S."/>
            <person name="Jagels K."/>
            <person name="Leather S."/>
            <person name="Moule S."/>
            <person name="Norberczak H."/>
            <person name="O'Neil S."/>
            <person name="Ormond D."/>
            <person name="Price C."/>
            <person name="Rabbinowitsch E."/>
            <person name="Rutter S."/>
            <person name="Sanders M."/>
            <person name="Saunders D."/>
            <person name="Seeger K."/>
            <person name="Sharp S."/>
            <person name="Simmonds M."/>
            <person name="Skelton J."/>
            <person name="Squares R."/>
            <person name="Squares S."/>
            <person name="Stevens K."/>
            <person name="Unwin L."/>
            <person name="Whitehead S."/>
            <person name="Barrell B.G."/>
            <person name="Maskell D.J."/>
        </authorList>
    </citation>
    <scope>NUCLEOTIDE SEQUENCE [LARGE SCALE GENOMIC DNA]</scope>
    <source>
        <strain>ATCC BAA-588 / NCTC 13252 / RB50</strain>
    </source>
</reference>
<comment type="function">
    <text evidence="1">Protease subunit of a proteasome-like degradation complex believed to be a general protein degrading machinery.</text>
</comment>
<comment type="catalytic activity">
    <reaction evidence="1">
        <text>ATP-dependent cleavage of peptide bonds with broad specificity.</text>
        <dbReference type="EC" id="3.4.25.2"/>
    </reaction>
</comment>
<comment type="activity regulation">
    <text evidence="1">Allosterically activated by HslU binding.</text>
</comment>
<comment type="subunit">
    <text evidence="1">A double ring-shaped homohexamer of HslV is capped on each side by a ring-shaped HslU homohexamer. The assembly of the HslU/HslV complex is dependent on binding of ATP.</text>
</comment>
<comment type="subcellular location">
    <subcellularLocation>
        <location evidence="1">Cytoplasm</location>
    </subcellularLocation>
</comment>
<comment type="similarity">
    <text evidence="1">Belongs to the peptidase T1B family. HslV subfamily.</text>
</comment>
<gene>
    <name evidence="1" type="primary">hslV</name>
    <name type="ordered locus">BB0179</name>
</gene>
<proteinExistence type="inferred from homology"/>
<sequence>MEQFHATTIVCVRRGNHVALGGDGQVTLGNIVIKGTARKIRRLYHDKVLAGFAGATADAFTLQERFEAKLEKHQGHLMRAAVELTRDWRTDRVLRRLEAMLIVADTEHTLVLTGNGDVLEPEHGLAAIGSGGAYAQSAALALLRNTELPPEAIVKQSLEIAGDLCIYTNQNHVIETLGA</sequence>
<feature type="chain" id="PRO_0000148086" description="ATP-dependent protease subunit HslV">
    <location>
        <begin position="1"/>
        <end position="179"/>
    </location>
</feature>
<feature type="active site" evidence="1">
    <location>
        <position position="7"/>
    </location>
</feature>
<feature type="binding site" evidence="1">
    <location>
        <position position="162"/>
    </location>
    <ligand>
        <name>Na(+)</name>
        <dbReference type="ChEBI" id="CHEBI:29101"/>
    </ligand>
</feature>
<feature type="binding site" evidence="1">
    <location>
        <position position="165"/>
    </location>
    <ligand>
        <name>Na(+)</name>
        <dbReference type="ChEBI" id="CHEBI:29101"/>
    </ligand>
</feature>
<feature type="binding site" evidence="1">
    <location>
        <position position="168"/>
    </location>
    <ligand>
        <name>Na(+)</name>
        <dbReference type="ChEBI" id="CHEBI:29101"/>
    </ligand>
</feature>
<organism>
    <name type="scientific">Bordetella bronchiseptica (strain ATCC BAA-588 / NCTC 13252 / RB50)</name>
    <name type="common">Alcaligenes bronchisepticus</name>
    <dbReference type="NCBI Taxonomy" id="257310"/>
    <lineage>
        <taxon>Bacteria</taxon>
        <taxon>Pseudomonadati</taxon>
        <taxon>Pseudomonadota</taxon>
        <taxon>Betaproteobacteria</taxon>
        <taxon>Burkholderiales</taxon>
        <taxon>Alcaligenaceae</taxon>
        <taxon>Bordetella</taxon>
    </lineage>
</organism>
<keyword id="KW-0021">Allosteric enzyme</keyword>
<keyword id="KW-0963">Cytoplasm</keyword>
<keyword id="KW-0378">Hydrolase</keyword>
<keyword id="KW-0479">Metal-binding</keyword>
<keyword id="KW-0645">Protease</keyword>
<keyword id="KW-0915">Sodium</keyword>
<keyword id="KW-0888">Threonine protease</keyword>